<organism>
    <name type="scientific">Clostridium botulinum (strain Loch Maree / Type A3)</name>
    <dbReference type="NCBI Taxonomy" id="498214"/>
    <lineage>
        <taxon>Bacteria</taxon>
        <taxon>Bacillati</taxon>
        <taxon>Bacillota</taxon>
        <taxon>Clostridia</taxon>
        <taxon>Eubacteriales</taxon>
        <taxon>Clostridiaceae</taxon>
        <taxon>Clostridium</taxon>
    </lineage>
</organism>
<evidence type="ECO:0000255" key="1">
    <source>
        <dbReference type="HAMAP-Rule" id="MF_00041"/>
    </source>
</evidence>
<name>SYC_CLOBM</name>
<comment type="catalytic activity">
    <reaction evidence="1">
        <text>tRNA(Cys) + L-cysteine + ATP = L-cysteinyl-tRNA(Cys) + AMP + diphosphate</text>
        <dbReference type="Rhea" id="RHEA:17773"/>
        <dbReference type="Rhea" id="RHEA-COMP:9661"/>
        <dbReference type="Rhea" id="RHEA-COMP:9679"/>
        <dbReference type="ChEBI" id="CHEBI:30616"/>
        <dbReference type="ChEBI" id="CHEBI:33019"/>
        <dbReference type="ChEBI" id="CHEBI:35235"/>
        <dbReference type="ChEBI" id="CHEBI:78442"/>
        <dbReference type="ChEBI" id="CHEBI:78517"/>
        <dbReference type="ChEBI" id="CHEBI:456215"/>
        <dbReference type="EC" id="6.1.1.16"/>
    </reaction>
</comment>
<comment type="cofactor">
    <cofactor evidence="1">
        <name>Zn(2+)</name>
        <dbReference type="ChEBI" id="CHEBI:29105"/>
    </cofactor>
    <text evidence="1">Binds 1 zinc ion per subunit.</text>
</comment>
<comment type="subunit">
    <text evidence="1">Monomer.</text>
</comment>
<comment type="subcellular location">
    <subcellularLocation>
        <location evidence="1">Cytoplasm</location>
    </subcellularLocation>
</comment>
<comment type="similarity">
    <text evidence="1">Belongs to the class-I aminoacyl-tRNA synthetase family.</text>
</comment>
<dbReference type="EC" id="6.1.1.16" evidence="1"/>
<dbReference type="EMBL" id="CP000962">
    <property type="protein sequence ID" value="ACA56149.1"/>
    <property type="molecule type" value="Genomic_DNA"/>
</dbReference>
<dbReference type="RefSeq" id="WP_012344049.1">
    <property type="nucleotide sequence ID" value="NC_010520.1"/>
</dbReference>
<dbReference type="SMR" id="B1KTA5"/>
<dbReference type="KEGG" id="cbl:CLK_2948"/>
<dbReference type="HOGENOM" id="CLU_013528_0_1_9"/>
<dbReference type="GO" id="GO:0005829">
    <property type="term" value="C:cytosol"/>
    <property type="evidence" value="ECO:0007669"/>
    <property type="project" value="TreeGrafter"/>
</dbReference>
<dbReference type="GO" id="GO:0005524">
    <property type="term" value="F:ATP binding"/>
    <property type="evidence" value="ECO:0007669"/>
    <property type="project" value="UniProtKB-UniRule"/>
</dbReference>
<dbReference type="GO" id="GO:0004817">
    <property type="term" value="F:cysteine-tRNA ligase activity"/>
    <property type="evidence" value="ECO:0007669"/>
    <property type="project" value="UniProtKB-UniRule"/>
</dbReference>
<dbReference type="GO" id="GO:0008270">
    <property type="term" value="F:zinc ion binding"/>
    <property type="evidence" value="ECO:0007669"/>
    <property type="project" value="UniProtKB-UniRule"/>
</dbReference>
<dbReference type="GO" id="GO:0006423">
    <property type="term" value="P:cysteinyl-tRNA aminoacylation"/>
    <property type="evidence" value="ECO:0007669"/>
    <property type="project" value="UniProtKB-UniRule"/>
</dbReference>
<dbReference type="CDD" id="cd00672">
    <property type="entry name" value="CysRS_core"/>
    <property type="match status" value="1"/>
</dbReference>
<dbReference type="FunFam" id="3.40.50.620:FF:000009">
    <property type="entry name" value="Cysteine--tRNA ligase"/>
    <property type="match status" value="1"/>
</dbReference>
<dbReference type="Gene3D" id="1.20.120.1910">
    <property type="entry name" value="Cysteine-tRNA ligase, C-terminal anti-codon recognition domain"/>
    <property type="match status" value="1"/>
</dbReference>
<dbReference type="Gene3D" id="3.40.50.620">
    <property type="entry name" value="HUPs"/>
    <property type="match status" value="1"/>
</dbReference>
<dbReference type="HAMAP" id="MF_00041">
    <property type="entry name" value="Cys_tRNA_synth"/>
    <property type="match status" value="1"/>
</dbReference>
<dbReference type="InterPro" id="IPR015803">
    <property type="entry name" value="Cys-tRNA-ligase"/>
</dbReference>
<dbReference type="InterPro" id="IPR015273">
    <property type="entry name" value="Cys-tRNA-synt_Ia_DALR"/>
</dbReference>
<dbReference type="InterPro" id="IPR024909">
    <property type="entry name" value="Cys-tRNA/MSH_ligase"/>
</dbReference>
<dbReference type="InterPro" id="IPR056411">
    <property type="entry name" value="CysS_C"/>
</dbReference>
<dbReference type="InterPro" id="IPR014729">
    <property type="entry name" value="Rossmann-like_a/b/a_fold"/>
</dbReference>
<dbReference type="InterPro" id="IPR032678">
    <property type="entry name" value="tRNA-synt_1_cat_dom"/>
</dbReference>
<dbReference type="InterPro" id="IPR009080">
    <property type="entry name" value="tRNAsynth_Ia_anticodon-bd"/>
</dbReference>
<dbReference type="NCBIfam" id="TIGR00435">
    <property type="entry name" value="cysS"/>
    <property type="match status" value="1"/>
</dbReference>
<dbReference type="PANTHER" id="PTHR10890:SF3">
    <property type="entry name" value="CYSTEINE--TRNA LIGASE, CYTOPLASMIC"/>
    <property type="match status" value="1"/>
</dbReference>
<dbReference type="PANTHER" id="PTHR10890">
    <property type="entry name" value="CYSTEINYL-TRNA SYNTHETASE"/>
    <property type="match status" value="1"/>
</dbReference>
<dbReference type="Pfam" id="PF23493">
    <property type="entry name" value="CysS_C"/>
    <property type="match status" value="1"/>
</dbReference>
<dbReference type="Pfam" id="PF09190">
    <property type="entry name" value="DALR_2"/>
    <property type="match status" value="1"/>
</dbReference>
<dbReference type="Pfam" id="PF01406">
    <property type="entry name" value="tRNA-synt_1e"/>
    <property type="match status" value="1"/>
</dbReference>
<dbReference type="PRINTS" id="PR00983">
    <property type="entry name" value="TRNASYNTHCYS"/>
</dbReference>
<dbReference type="SMART" id="SM00840">
    <property type="entry name" value="DALR_2"/>
    <property type="match status" value="1"/>
</dbReference>
<dbReference type="SUPFAM" id="SSF47323">
    <property type="entry name" value="Anticodon-binding domain of a subclass of class I aminoacyl-tRNA synthetases"/>
    <property type="match status" value="1"/>
</dbReference>
<dbReference type="SUPFAM" id="SSF52374">
    <property type="entry name" value="Nucleotidylyl transferase"/>
    <property type="match status" value="1"/>
</dbReference>
<protein>
    <recommendedName>
        <fullName evidence="1">Cysteine--tRNA ligase</fullName>
        <ecNumber evidence="1">6.1.1.16</ecNumber>
    </recommendedName>
    <alternativeName>
        <fullName evidence="1">Cysteinyl-tRNA synthetase</fullName>
        <shortName evidence="1">CysRS</shortName>
    </alternativeName>
</protein>
<reference key="1">
    <citation type="journal article" date="2007" name="PLoS ONE">
        <title>Analysis of the neurotoxin complex genes in Clostridium botulinum A1-A4 and B1 strains: BoNT/A3, /Ba4 and /B1 clusters are located within plasmids.</title>
        <authorList>
            <person name="Smith T.J."/>
            <person name="Hill K.K."/>
            <person name="Foley B.T."/>
            <person name="Detter J.C."/>
            <person name="Munk A.C."/>
            <person name="Bruce D.C."/>
            <person name="Doggett N.A."/>
            <person name="Smith L.A."/>
            <person name="Marks J.D."/>
            <person name="Xie G."/>
            <person name="Brettin T.S."/>
        </authorList>
    </citation>
    <scope>NUCLEOTIDE SEQUENCE [LARGE SCALE GENOMIC DNA]</scope>
    <source>
        <strain>Loch Maree / Type A3</strain>
    </source>
</reference>
<gene>
    <name evidence="1" type="primary">cysS</name>
    <name type="ordered locus">CLK_2948</name>
</gene>
<accession>B1KTA5</accession>
<feature type="chain" id="PRO_1000090828" description="Cysteine--tRNA ligase">
    <location>
        <begin position="1"/>
        <end position="465"/>
    </location>
</feature>
<feature type="short sequence motif" description="'HIGH' region">
    <location>
        <begin position="29"/>
        <end position="39"/>
    </location>
</feature>
<feature type="short sequence motif" description="'KMSKS' region">
    <location>
        <begin position="264"/>
        <end position="268"/>
    </location>
</feature>
<feature type="binding site" evidence="1">
    <location>
        <position position="27"/>
    </location>
    <ligand>
        <name>Zn(2+)</name>
        <dbReference type="ChEBI" id="CHEBI:29105"/>
    </ligand>
</feature>
<feature type="binding site" evidence="1">
    <location>
        <position position="207"/>
    </location>
    <ligand>
        <name>Zn(2+)</name>
        <dbReference type="ChEBI" id="CHEBI:29105"/>
    </ligand>
</feature>
<feature type="binding site" evidence="1">
    <location>
        <position position="232"/>
    </location>
    <ligand>
        <name>Zn(2+)</name>
        <dbReference type="ChEBI" id="CHEBI:29105"/>
    </ligand>
</feature>
<feature type="binding site" evidence="1">
    <location>
        <position position="236"/>
    </location>
    <ligand>
        <name>Zn(2+)</name>
        <dbReference type="ChEBI" id="CHEBI:29105"/>
    </ligand>
</feature>
<feature type="binding site" evidence="1">
    <location>
        <position position="267"/>
    </location>
    <ligand>
        <name>ATP</name>
        <dbReference type="ChEBI" id="CHEBI:30616"/>
    </ligand>
</feature>
<sequence length="465" mass="54344">MKVYNTLTNKKEEFVTLVPGEVKMYVCGPTVYNFFHIGNARTFVVFDTIRRYLEYRGYKVKFIQNFTDIDDKMIKRANEEGSTVKELGDRFIKEYYKDADDLNIERATKNPRATEFMEEIIKFVSDLIEKGYAYEIDGDVYFSTKKFNSYGKLSGQNLEELQLGSRINVDERKKDPMDFAIWKNQKPGEPAWESPWGMGRPGWHIECSCMAYNLLGETIDIHAGGSDLSFPHHENEIAQSEARTGKQFAKYWLHSAFVNVNNQKMSKSLNNFFTAREILEKYDADVLRMFMLSGHYRTQINFSMELLDSTKAALDRLYNSINNLENLLDEVKNEELRDEELEYKNELQKYKEKYIEKMDDDFNTADAISVIFDLIRDVNTNVTIESSKELVKYTLDLIRELGNPLGILQESTKASLEEEIEKLIEERQKARKEKNWALADKIRDDLKERGIVLEDTPQGVRWKQI</sequence>
<keyword id="KW-0030">Aminoacyl-tRNA synthetase</keyword>
<keyword id="KW-0067">ATP-binding</keyword>
<keyword id="KW-0963">Cytoplasm</keyword>
<keyword id="KW-0436">Ligase</keyword>
<keyword id="KW-0479">Metal-binding</keyword>
<keyword id="KW-0547">Nucleotide-binding</keyword>
<keyword id="KW-0648">Protein biosynthesis</keyword>
<keyword id="KW-0862">Zinc</keyword>
<proteinExistence type="inferred from homology"/>